<reference key="1">
    <citation type="journal article" date="2000" name="Proc. Natl. Acad. Sci. U.S.A.">
        <title>Archaeal adaptation to higher temperatures revealed by genomic sequence of Thermoplasma volcanium.</title>
        <authorList>
            <person name="Kawashima T."/>
            <person name="Amano N."/>
            <person name="Koike H."/>
            <person name="Makino S."/>
            <person name="Higuchi S."/>
            <person name="Kawashima-Ohya Y."/>
            <person name="Watanabe K."/>
            <person name="Yamazaki M."/>
            <person name="Kanehori K."/>
            <person name="Kawamoto T."/>
            <person name="Nunoshiba T."/>
            <person name="Yamamoto Y."/>
            <person name="Aramaki H."/>
            <person name="Makino K."/>
            <person name="Suzuki M."/>
        </authorList>
    </citation>
    <scope>NUCLEOTIDE SEQUENCE [LARGE SCALE GENOMIC DNA]</scope>
    <source>
        <strain>ATCC 51530 / DSM 4299 / JCM 9571 / NBRC 15438 / GSS1</strain>
    </source>
</reference>
<feature type="chain" id="PRO_0000140825" description="3-dehydroquinate synthase">
    <location>
        <begin position="1"/>
        <end position="360"/>
    </location>
</feature>
<feature type="binding site" evidence="1">
    <location>
        <begin position="70"/>
        <end position="75"/>
    </location>
    <ligand>
        <name>NAD(+)</name>
        <dbReference type="ChEBI" id="CHEBI:57540"/>
    </ligand>
</feature>
<feature type="binding site" evidence="1">
    <location>
        <begin position="128"/>
        <end position="129"/>
    </location>
    <ligand>
        <name>NAD(+)</name>
        <dbReference type="ChEBI" id="CHEBI:57540"/>
    </ligand>
</feature>
<feature type="binding site" evidence="1">
    <location>
        <position position="141"/>
    </location>
    <ligand>
        <name>NAD(+)</name>
        <dbReference type="ChEBI" id="CHEBI:57540"/>
    </ligand>
</feature>
<feature type="binding site" evidence="1">
    <location>
        <position position="150"/>
    </location>
    <ligand>
        <name>NAD(+)</name>
        <dbReference type="ChEBI" id="CHEBI:57540"/>
    </ligand>
</feature>
<feature type="binding site" evidence="1">
    <location>
        <position position="182"/>
    </location>
    <ligand>
        <name>Zn(2+)</name>
        <dbReference type="ChEBI" id="CHEBI:29105"/>
    </ligand>
</feature>
<feature type="binding site" evidence="1">
    <location>
        <position position="243"/>
    </location>
    <ligand>
        <name>Zn(2+)</name>
        <dbReference type="ChEBI" id="CHEBI:29105"/>
    </ligand>
</feature>
<feature type="binding site" evidence="1">
    <location>
        <position position="259"/>
    </location>
    <ligand>
        <name>Zn(2+)</name>
        <dbReference type="ChEBI" id="CHEBI:29105"/>
    </ligand>
</feature>
<protein>
    <recommendedName>
        <fullName evidence="1">3-dehydroquinate synthase</fullName>
        <shortName evidence="1">DHQS</shortName>
        <ecNumber evidence="1">4.2.3.4</ecNumber>
    </recommendedName>
</protein>
<sequence length="360" mass="39616">MDTQRFVITMNGDNISFIVGDNAINHLSEEAGKYDSIVIMISKTVEEMYANHIPDVGSFGNSVVKISLNDGESLKSLRNYQKIVKVLLERKVDRRSLLVYIGGGTVGDLAGFVASTYKRGVMMIAVPTTLLAQVDSSIGGKNGLDFSDVKNVIGTFYNPYMVIDDTVFLKNNSFIIREGMSEVIKYAIISGGDMYDTLNRCSIDNFDACATNIIKLSVKIKSEIVNRDFYDRTGIRSVLNLGHTIAHGIEGATKGSISHGKAVATGMLVEAHIGEKYGNTNHEVIEAIRDLMKRYGIEELNLKEIGPGNILRYISNDKKIMEGYINMPVPSEIGKVITMKATERMISDGINTFIKENDAS</sequence>
<gene>
    <name evidence="1" type="primary">aroB</name>
    <name type="ordered locus">TV1339</name>
    <name type="ORF">TVG1384310</name>
</gene>
<evidence type="ECO:0000255" key="1">
    <source>
        <dbReference type="HAMAP-Rule" id="MF_00110"/>
    </source>
</evidence>
<comment type="function">
    <text evidence="1">Catalyzes the conversion of 3-deoxy-D-arabino-heptulosonate 7-phosphate (DAHP) to dehydroquinate (DHQ).</text>
</comment>
<comment type="catalytic activity">
    <reaction evidence="1">
        <text>7-phospho-2-dehydro-3-deoxy-D-arabino-heptonate = 3-dehydroquinate + phosphate</text>
        <dbReference type="Rhea" id="RHEA:21968"/>
        <dbReference type="ChEBI" id="CHEBI:32364"/>
        <dbReference type="ChEBI" id="CHEBI:43474"/>
        <dbReference type="ChEBI" id="CHEBI:58394"/>
        <dbReference type="EC" id="4.2.3.4"/>
    </reaction>
</comment>
<comment type="cofactor">
    <cofactor evidence="1">
        <name>NAD(+)</name>
        <dbReference type="ChEBI" id="CHEBI:57540"/>
    </cofactor>
</comment>
<comment type="cofactor">
    <cofactor evidence="1">
        <name>Co(2+)</name>
        <dbReference type="ChEBI" id="CHEBI:48828"/>
    </cofactor>
    <cofactor evidence="1">
        <name>Zn(2+)</name>
        <dbReference type="ChEBI" id="CHEBI:29105"/>
    </cofactor>
    <text evidence="1">Binds 1 divalent metal cation per subunit. Can use either Co(2+) or Zn(2+).</text>
</comment>
<comment type="pathway">
    <text evidence="1">Metabolic intermediate biosynthesis; chorismate biosynthesis; chorismate from D-erythrose 4-phosphate and phosphoenolpyruvate: step 2/7.</text>
</comment>
<comment type="subcellular location">
    <subcellularLocation>
        <location evidence="1">Cytoplasm</location>
    </subcellularLocation>
</comment>
<comment type="similarity">
    <text evidence="1">Belongs to the sugar phosphate cyclases superfamily. Dehydroquinate synthase family.</text>
</comment>
<organism>
    <name type="scientific">Thermoplasma volcanium (strain ATCC 51530 / DSM 4299 / JCM 9571 / NBRC 15438 / GSS1)</name>
    <dbReference type="NCBI Taxonomy" id="273116"/>
    <lineage>
        <taxon>Archaea</taxon>
        <taxon>Methanobacteriati</taxon>
        <taxon>Thermoplasmatota</taxon>
        <taxon>Thermoplasmata</taxon>
        <taxon>Thermoplasmatales</taxon>
        <taxon>Thermoplasmataceae</taxon>
        <taxon>Thermoplasma</taxon>
    </lineage>
</organism>
<accession>Q978S6</accession>
<keyword id="KW-0028">Amino-acid biosynthesis</keyword>
<keyword id="KW-0057">Aromatic amino acid biosynthesis</keyword>
<keyword id="KW-0170">Cobalt</keyword>
<keyword id="KW-0963">Cytoplasm</keyword>
<keyword id="KW-0456">Lyase</keyword>
<keyword id="KW-0479">Metal-binding</keyword>
<keyword id="KW-0520">NAD</keyword>
<keyword id="KW-0547">Nucleotide-binding</keyword>
<keyword id="KW-0862">Zinc</keyword>
<name>AROB_THEVO</name>
<dbReference type="EC" id="4.2.3.4" evidence="1"/>
<dbReference type="EMBL" id="BA000011">
    <property type="protein sequence ID" value="BAB60481.1"/>
    <property type="molecule type" value="Genomic_DNA"/>
</dbReference>
<dbReference type="RefSeq" id="WP_010917574.1">
    <property type="nucleotide sequence ID" value="NC_002689.2"/>
</dbReference>
<dbReference type="SMR" id="Q978S6"/>
<dbReference type="STRING" id="273116.gene:9382147"/>
<dbReference type="PaxDb" id="273116-14325578"/>
<dbReference type="GeneID" id="1441456"/>
<dbReference type="KEGG" id="tvo:TVG1384310"/>
<dbReference type="eggNOG" id="arCOG00983">
    <property type="taxonomic scope" value="Archaea"/>
</dbReference>
<dbReference type="HOGENOM" id="CLU_001201_0_1_2"/>
<dbReference type="OrthoDB" id="21407at2157"/>
<dbReference type="PhylomeDB" id="Q978S6"/>
<dbReference type="UniPathway" id="UPA00053">
    <property type="reaction ID" value="UER00085"/>
</dbReference>
<dbReference type="Proteomes" id="UP000001017">
    <property type="component" value="Chromosome"/>
</dbReference>
<dbReference type="GO" id="GO:0005737">
    <property type="term" value="C:cytoplasm"/>
    <property type="evidence" value="ECO:0007669"/>
    <property type="project" value="UniProtKB-SubCell"/>
</dbReference>
<dbReference type="GO" id="GO:0003856">
    <property type="term" value="F:3-dehydroquinate synthase activity"/>
    <property type="evidence" value="ECO:0007669"/>
    <property type="project" value="UniProtKB-UniRule"/>
</dbReference>
<dbReference type="GO" id="GO:0046872">
    <property type="term" value="F:metal ion binding"/>
    <property type="evidence" value="ECO:0007669"/>
    <property type="project" value="UniProtKB-KW"/>
</dbReference>
<dbReference type="GO" id="GO:0000166">
    <property type="term" value="F:nucleotide binding"/>
    <property type="evidence" value="ECO:0007669"/>
    <property type="project" value="UniProtKB-KW"/>
</dbReference>
<dbReference type="GO" id="GO:0008652">
    <property type="term" value="P:amino acid biosynthetic process"/>
    <property type="evidence" value="ECO:0007669"/>
    <property type="project" value="UniProtKB-KW"/>
</dbReference>
<dbReference type="GO" id="GO:0009073">
    <property type="term" value="P:aromatic amino acid family biosynthetic process"/>
    <property type="evidence" value="ECO:0007669"/>
    <property type="project" value="UniProtKB-KW"/>
</dbReference>
<dbReference type="GO" id="GO:0009423">
    <property type="term" value="P:chorismate biosynthetic process"/>
    <property type="evidence" value="ECO:0007669"/>
    <property type="project" value="UniProtKB-UniRule"/>
</dbReference>
<dbReference type="CDD" id="cd08195">
    <property type="entry name" value="DHQS"/>
    <property type="match status" value="1"/>
</dbReference>
<dbReference type="Gene3D" id="3.40.50.1970">
    <property type="match status" value="1"/>
</dbReference>
<dbReference type="Gene3D" id="1.20.1090.10">
    <property type="entry name" value="Dehydroquinate synthase-like - alpha domain"/>
    <property type="match status" value="1"/>
</dbReference>
<dbReference type="HAMAP" id="MF_00110">
    <property type="entry name" value="DHQ_synthase"/>
    <property type="match status" value="1"/>
</dbReference>
<dbReference type="InterPro" id="IPR050071">
    <property type="entry name" value="Dehydroquinate_synthase"/>
</dbReference>
<dbReference type="InterPro" id="IPR016037">
    <property type="entry name" value="DHQ_synth_AroB"/>
</dbReference>
<dbReference type="InterPro" id="IPR030963">
    <property type="entry name" value="DHQ_synth_fam"/>
</dbReference>
<dbReference type="InterPro" id="IPR030960">
    <property type="entry name" value="DHQS/DOIS_N"/>
</dbReference>
<dbReference type="InterPro" id="IPR056179">
    <property type="entry name" value="DHQS_C"/>
</dbReference>
<dbReference type="NCBIfam" id="TIGR01357">
    <property type="entry name" value="aroB"/>
    <property type="match status" value="1"/>
</dbReference>
<dbReference type="PANTHER" id="PTHR43622">
    <property type="entry name" value="3-DEHYDROQUINATE SYNTHASE"/>
    <property type="match status" value="1"/>
</dbReference>
<dbReference type="PANTHER" id="PTHR43622:SF1">
    <property type="entry name" value="3-DEHYDROQUINATE SYNTHASE"/>
    <property type="match status" value="1"/>
</dbReference>
<dbReference type="Pfam" id="PF01761">
    <property type="entry name" value="DHQ_synthase"/>
    <property type="match status" value="1"/>
</dbReference>
<dbReference type="Pfam" id="PF24621">
    <property type="entry name" value="DHQS_C"/>
    <property type="match status" value="1"/>
</dbReference>
<dbReference type="PIRSF" id="PIRSF001455">
    <property type="entry name" value="DHQ_synth"/>
    <property type="match status" value="1"/>
</dbReference>
<dbReference type="SUPFAM" id="SSF56796">
    <property type="entry name" value="Dehydroquinate synthase-like"/>
    <property type="match status" value="1"/>
</dbReference>
<proteinExistence type="inferred from homology"/>